<gene>
    <name evidence="1" type="primary">ruvB</name>
    <name type="ordered locus">PBPRA1117</name>
</gene>
<protein>
    <recommendedName>
        <fullName evidence="1">Holliday junction branch migration complex subunit RuvB</fullName>
        <ecNumber evidence="1">3.6.4.-</ecNumber>
    </recommendedName>
</protein>
<sequence length="337" mass="37470">MIEADRLISNSFESRDDEVIDRAIRPKLLNDYQGQDHVRGQMEIFIKAAQLREEALDHLLIFGPPGLGKTTLANIVANEMGVSIRTTSGPVLEKAGDLAALLTNLEPNDVLFIDEIHRLSPHVEEVLYPAMEDYQLDIMIGEGPAARSIKIDLPPFTLIGATTRAGSLTSPLRDRFGITQRLEYYKVDDLKDIVQRSANCLGLSMEEEGALEMAQRARGTPRIANRLLRRVRDYAEVVGNGIICSDTAKKALDMLDVDSSGFDYMDRKLLLAIIDKFMGGPVGLDNLAAAIGEEKDTIEDVLEPYLIQQGFLQRTPRGRIATHRAYLHFGLDIPEAR</sequence>
<feature type="chain" id="PRO_0000165572" description="Holliday junction branch migration complex subunit RuvB">
    <location>
        <begin position="1"/>
        <end position="337"/>
    </location>
</feature>
<feature type="region of interest" description="Large ATPase domain (RuvB-L)" evidence="1">
    <location>
        <begin position="4"/>
        <end position="185"/>
    </location>
</feature>
<feature type="region of interest" description="Small ATPAse domain (RuvB-S)" evidence="1">
    <location>
        <begin position="186"/>
        <end position="256"/>
    </location>
</feature>
<feature type="region of interest" description="Head domain (RuvB-H)" evidence="1">
    <location>
        <begin position="259"/>
        <end position="337"/>
    </location>
</feature>
<feature type="binding site" evidence="1">
    <location>
        <position position="24"/>
    </location>
    <ligand>
        <name>ATP</name>
        <dbReference type="ChEBI" id="CHEBI:30616"/>
    </ligand>
</feature>
<feature type="binding site" evidence="1">
    <location>
        <position position="25"/>
    </location>
    <ligand>
        <name>ATP</name>
        <dbReference type="ChEBI" id="CHEBI:30616"/>
    </ligand>
</feature>
<feature type="binding site" evidence="1">
    <location>
        <position position="66"/>
    </location>
    <ligand>
        <name>ATP</name>
        <dbReference type="ChEBI" id="CHEBI:30616"/>
    </ligand>
</feature>
<feature type="binding site" evidence="1">
    <location>
        <position position="69"/>
    </location>
    <ligand>
        <name>ATP</name>
        <dbReference type="ChEBI" id="CHEBI:30616"/>
    </ligand>
</feature>
<feature type="binding site" evidence="1">
    <location>
        <position position="70"/>
    </location>
    <ligand>
        <name>ATP</name>
        <dbReference type="ChEBI" id="CHEBI:30616"/>
    </ligand>
</feature>
<feature type="binding site" evidence="1">
    <location>
        <position position="70"/>
    </location>
    <ligand>
        <name>Mg(2+)</name>
        <dbReference type="ChEBI" id="CHEBI:18420"/>
    </ligand>
</feature>
<feature type="binding site" evidence="1">
    <location>
        <position position="71"/>
    </location>
    <ligand>
        <name>ATP</name>
        <dbReference type="ChEBI" id="CHEBI:30616"/>
    </ligand>
</feature>
<feature type="binding site" evidence="1">
    <location>
        <begin position="132"/>
        <end position="134"/>
    </location>
    <ligand>
        <name>ATP</name>
        <dbReference type="ChEBI" id="CHEBI:30616"/>
    </ligand>
</feature>
<feature type="binding site" evidence="1">
    <location>
        <position position="175"/>
    </location>
    <ligand>
        <name>ATP</name>
        <dbReference type="ChEBI" id="CHEBI:30616"/>
    </ligand>
</feature>
<feature type="binding site" evidence="1">
    <location>
        <position position="185"/>
    </location>
    <ligand>
        <name>ATP</name>
        <dbReference type="ChEBI" id="CHEBI:30616"/>
    </ligand>
</feature>
<feature type="binding site" evidence="1">
    <location>
        <position position="222"/>
    </location>
    <ligand>
        <name>ATP</name>
        <dbReference type="ChEBI" id="CHEBI:30616"/>
    </ligand>
</feature>
<feature type="binding site" evidence="1">
    <location>
        <position position="314"/>
    </location>
    <ligand>
        <name>DNA</name>
        <dbReference type="ChEBI" id="CHEBI:16991"/>
    </ligand>
</feature>
<feature type="binding site" evidence="1">
    <location>
        <position position="319"/>
    </location>
    <ligand>
        <name>DNA</name>
        <dbReference type="ChEBI" id="CHEBI:16991"/>
    </ligand>
</feature>
<reference key="1">
    <citation type="journal article" date="2005" name="Science">
        <title>Life at depth: Photobacterium profundum genome sequence and expression analysis.</title>
        <authorList>
            <person name="Vezzi A."/>
            <person name="Campanaro S."/>
            <person name="D'Angelo M."/>
            <person name="Simonato F."/>
            <person name="Vitulo N."/>
            <person name="Lauro F.M."/>
            <person name="Cestaro A."/>
            <person name="Malacrida G."/>
            <person name="Simionati B."/>
            <person name="Cannata N."/>
            <person name="Romualdi C."/>
            <person name="Bartlett D.H."/>
            <person name="Valle G."/>
        </authorList>
    </citation>
    <scope>NUCLEOTIDE SEQUENCE [LARGE SCALE GENOMIC DNA]</scope>
    <source>
        <strain>ATCC BAA-1253 / SS9</strain>
    </source>
</reference>
<evidence type="ECO:0000255" key="1">
    <source>
        <dbReference type="HAMAP-Rule" id="MF_00016"/>
    </source>
</evidence>
<organism>
    <name type="scientific">Photobacterium profundum (strain SS9)</name>
    <dbReference type="NCBI Taxonomy" id="298386"/>
    <lineage>
        <taxon>Bacteria</taxon>
        <taxon>Pseudomonadati</taxon>
        <taxon>Pseudomonadota</taxon>
        <taxon>Gammaproteobacteria</taxon>
        <taxon>Vibrionales</taxon>
        <taxon>Vibrionaceae</taxon>
        <taxon>Photobacterium</taxon>
    </lineage>
</organism>
<keyword id="KW-0067">ATP-binding</keyword>
<keyword id="KW-0963">Cytoplasm</keyword>
<keyword id="KW-0227">DNA damage</keyword>
<keyword id="KW-0233">DNA recombination</keyword>
<keyword id="KW-0234">DNA repair</keyword>
<keyword id="KW-0238">DNA-binding</keyword>
<keyword id="KW-0378">Hydrolase</keyword>
<keyword id="KW-0547">Nucleotide-binding</keyword>
<keyword id="KW-1185">Reference proteome</keyword>
<dbReference type="EC" id="3.6.4.-" evidence="1"/>
<dbReference type="EMBL" id="CR378666">
    <property type="protein sequence ID" value="CAG19528.1"/>
    <property type="molecule type" value="Genomic_DNA"/>
</dbReference>
<dbReference type="RefSeq" id="WP_011217860.1">
    <property type="nucleotide sequence ID" value="NC_006370.1"/>
</dbReference>
<dbReference type="SMR" id="Q6LT48"/>
<dbReference type="STRING" id="298386.PBPRA1117"/>
<dbReference type="KEGG" id="ppr:PBPRA1117"/>
<dbReference type="eggNOG" id="COG2255">
    <property type="taxonomic scope" value="Bacteria"/>
</dbReference>
<dbReference type="HOGENOM" id="CLU_055599_1_0_6"/>
<dbReference type="Proteomes" id="UP000000593">
    <property type="component" value="Chromosome 1"/>
</dbReference>
<dbReference type="GO" id="GO:0005737">
    <property type="term" value="C:cytoplasm"/>
    <property type="evidence" value="ECO:0007669"/>
    <property type="project" value="UniProtKB-SubCell"/>
</dbReference>
<dbReference type="GO" id="GO:0048476">
    <property type="term" value="C:Holliday junction resolvase complex"/>
    <property type="evidence" value="ECO:0007669"/>
    <property type="project" value="UniProtKB-UniRule"/>
</dbReference>
<dbReference type="GO" id="GO:0005524">
    <property type="term" value="F:ATP binding"/>
    <property type="evidence" value="ECO:0007669"/>
    <property type="project" value="UniProtKB-UniRule"/>
</dbReference>
<dbReference type="GO" id="GO:0016887">
    <property type="term" value="F:ATP hydrolysis activity"/>
    <property type="evidence" value="ECO:0007669"/>
    <property type="project" value="InterPro"/>
</dbReference>
<dbReference type="GO" id="GO:0000400">
    <property type="term" value="F:four-way junction DNA binding"/>
    <property type="evidence" value="ECO:0007669"/>
    <property type="project" value="UniProtKB-UniRule"/>
</dbReference>
<dbReference type="GO" id="GO:0009378">
    <property type="term" value="F:four-way junction helicase activity"/>
    <property type="evidence" value="ECO:0007669"/>
    <property type="project" value="InterPro"/>
</dbReference>
<dbReference type="GO" id="GO:0006310">
    <property type="term" value="P:DNA recombination"/>
    <property type="evidence" value="ECO:0007669"/>
    <property type="project" value="UniProtKB-UniRule"/>
</dbReference>
<dbReference type="GO" id="GO:0006281">
    <property type="term" value="P:DNA repair"/>
    <property type="evidence" value="ECO:0007669"/>
    <property type="project" value="UniProtKB-UniRule"/>
</dbReference>
<dbReference type="CDD" id="cd00009">
    <property type="entry name" value="AAA"/>
    <property type="match status" value="1"/>
</dbReference>
<dbReference type="FunFam" id="1.10.10.10:FF:000086">
    <property type="entry name" value="Holliday junction ATP-dependent DNA helicase RuvB"/>
    <property type="match status" value="1"/>
</dbReference>
<dbReference type="FunFam" id="1.10.8.60:FF:000023">
    <property type="entry name" value="Holliday junction ATP-dependent DNA helicase RuvB"/>
    <property type="match status" value="1"/>
</dbReference>
<dbReference type="FunFam" id="3.40.50.300:FF:000073">
    <property type="entry name" value="Holliday junction ATP-dependent DNA helicase RuvB"/>
    <property type="match status" value="1"/>
</dbReference>
<dbReference type="Gene3D" id="1.10.8.60">
    <property type="match status" value="1"/>
</dbReference>
<dbReference type="Gene3D" id="3.40.50.300">
    <property type="entry name" value="P-loop containing nucleotide triphosphate hydrolases"/>
    <property type="match status" value="1"/>
</dbReference>
<dbReference type="Gene3D" id="1.10.10.10">
    <property type="entry name" value="Winged helix-like DNA-binding domain superfamily/Winged helix DNA-binding domain"/>
    <property type="match status" value="1"/>
</dbReference>
<dbReference type="HAMAP" id="MF_00016">
    <property type="entry name" value="DNA_HJ_migration_RuvB"/>
    <property type="match status" value="1"/>
</dbReference>
<dbReference type="InterPro" id="IPR003593">
    <property type="entry name" value="AAA+_ATPase"/>
</dbReference>
<dbReference type="InterPro" id="IPR041445">
    <property type="entry name" value="AAA_lid_4"/>
</dbReference>
<dbReference type="InterPro" id="IPR004605">
    <property type="entry name" value="DNA_helicase_Holl-junc_RuvB"/>
</dbReference>
<dbReference type="InterPro" id="IPR027417">
    <property type="entry name" value="P-loop_NTPase"/>
</dbReference>
<dbReference type="InterPro" id="IPR008824">
    <property type="entry name" value="RuvB-like_N"/>
</dbReference>
<dbReference type="InterPro" id="IPR008823">
    <property type="entry name" value="RuvB_C"/>
</dbReference>
<dbReference type="InterPro" id="IPR036388">
    <property type="entry name" value="WH-like_DNA-bd_sf"/>
</dbReference>
<dbReference type="InterPro" id="IPR036390">
    <property type="entry name" value="WH_DNA-bd_sf"/>
</dbReference>
<dbReference type="NCBIfam" id="NF000868">
    <property type="entry name" value="PRK00080.1"/>
    <property type="match status" value="1"/>
</dbReference>
<dbReference type="NCBIfam" id="TIGR00635">
    <property type="entry name" value="ruvB"/>
    <property type="match status" value="1"/>
</dbReference>
<dbReference type="PANTHER" id="PTHR42848">
    <property type="match status" value="1"/>
</dbReference>
<dbReference type="PANTHER" id="PTHR42848:SF1">
    <property type="entry name" value="HOLLIDAY JUNCTION BRANCH MIGRATION COMPLEX SUBUNIT RUVB"/>
    <property type="match status" value="1"/>
</dbReference>
<dbReference type="Pfam" id="PF17864">
    <property type="entry name" value="AAA_lid_4"/>
    <property type="match status" value="1"/>
</dbReference>
<dbReference type="Pfam" id="PF05491">
    <property type="entry name" value="RuvB_C"/>
    <property type="match status" value="1"/>
</dbReference>
<dbReference type="Pfam" id="PF05496">
    <property type="entry name" value="RuvB_N"/>
    <property type="match status" value="1"/>
</dbReference>
<dbReference type="SMART" id="SM00382">
    <property type="entry name" value="AAA"/>
    <property type="match status" value="1"/>
</dbReference>
<dbReference type="SUPFAM" id="SSF52540">
    <property type="entry name" value="P-loop containing nucleoside triphosphate hydrolases"/>
    <property type="match status" value="1"/>
</dbReference>
<dbReference type="SUPFAM" id="SSF46785">
    <property type="entry name" value="Winged helix' DNA-binding domain"/>
    <property type="match status" value="1"/>
</dbReference>
<accession>Q6LT48</accession>
<proteinExistence type="inferred from homology"/>
<comment type="function">
    <text evidence="1">The RuvA-RuvB-RuvC complex processes Holliday junction (HJ) DNA during genetic recombination and DNA repair, while the RuvA-RuvB complex plays an important role in the rescue of blocked DNA replication forks via replication fork reversal (RFR). RuvA specifically binds to HJ cruciform DNA, conferring on it an open structure. The RuvB hexamer acts as an ATP-dependent pump, pulling dsDNA into and through the RuvAB complex. RuvB forms 2 homohexamers on either side of HJ DNA bound by 1 or 2 RuvA tetramers; 4 subunits per hexamer contact DNA at a time. Coordinated motions by a converter formed by DNA-disengaged RuvB subunits stimulates ATP hydrolysis and nucleotide exchange. Immobilization of the converter enables RuvB to convert the ATP-contained energy into a lever motion, pulling 2 nucleotides of DNA out of the RuvA tetramer per ATP hydrolyzed, thus driving DNA branch migration. The RuvB motors rotate together with the DNA substrate, which together with the progressing nucleotide cycle form the mechanistic basis for DNA recombination by continuous HJ branch migration. Branch migration allows RuvC to scan DNA until it finds its consensus sequence, where it cleaves and resolves cruciform DNA.</text>
</comment>
<comment type="catalytic activity">
    <reaction evidence="1">
        <text>ATP + H2O = ADP + phosphate + H(+)</text>
        <dbReference type="Rhea" id="RHEA:13065"/>
        <dbReference type="ChEBI" id="CHEBI:15377"/>
        <dbReference type="ChEBI" id="CHEBI:15378"/>
        <dbReference type="ChEBI" id="CHEBI:30616"/>
        <dbReference type="ChEBI" id="CHEBI:43474"/>
        <dbReference type="ChEBI" id="CHEBI:456216"/>
    </reaction>
</comment>
<comment type="subunit">
    <text evidence="1">Homohexamer. Forms an RuvA(8)-RuvB(12)-Holliday junction (HJ) complex. HJ DNA is sandwiched between 2 RuvA tetramers; dsDNA enters through RuvA and exits via RuvB. An RuvB hexamer assembles on each DNA strand where it exits the tetramer. Each RuvB hexamer is contacted by two RuvA subunits (via domain III) on 2 adjacent RuvB subunits; this complex drives branch migration. In the full resolvosome a probable DNA-RuvA(4)-RuvB(12)-RuvC(2) complex forms which resolves the HJ.</text>
</comment>
<comment type="subcellular location">
    <subcellularLocation>
        <location evidence="1">Cytoplasm</location>
    </subcellularLocation>
</comment>
<comment type="domain">
    <text evidence="1">Has 3 domains, the large (RuvB-L) and small ATPase (RuvB-S) domains and the C-terminal head (RuvB-H) domain. The head domain binds DNA, while the ATPase domains jointly bind ATP, ADP or are empty depending on the state of the subunit in the translocation cycle. During a single DNA translocation step the structure of each domain remains the same, but their relative positions change.</text>
</comment>
<comment type="similarity">
    <text evidence="1">Belongs to the RuvB family.</text>
</comment>
<name>RUVB_PHOPR</name>